<gene>
    <name evidence="1" type="primary">rpsH</name>
    <name type="ordered locus">FTA_0265</name>
</gene>
<sequence>MSMQDPIADMFTRIRNGLSAEKEFVSVPFSKIKMEIANFLVNEGYIKSCSKGTTSMGHPSIEIELKYHAGAPVIEMIKRVSRPSLRIYKSHADLPKVYGGYGVAIVSTSKGLVSDRKARDLGVGGEIIGYVA</sequence>
<name>RS8_FRATF</name>
<keyword id="KW-0687">Ribonucleoprotein</keyword>
<keyword id="KW-0689">Ribosomal protein</keyword>
<keyword id="KW-0694">RNA-binding</keyword>
<keyword id="KW-0699">rRNA-binding</keyword>
<evidence type="ECO:0000255" key="1">
    <source>
        <dbReference type="HAMAP-Rule" id="MF_01302"/>
    </source>
</evidence>
<evidence type="ECO:0000305" key="2"/>
<organism>
    <name type="scientific">Francisella tularensis subsp. holarctica (strain FTNF002-00 / FTA)</name>
    <dbReference type="NCBI Taxonomy" id="458234"/>
    <lineage>
        <taxon>Bacteria</taxon>
        <taxon>Pseudomonadati</taxon>
        <taxon>Pseudomonadota</taxon>
        <taxon>Gammaproteobacteria</taxon>
        <taxon>Thiotrichales</taxon>
        <taxon>Francisellaceae</taxon>
        <taxon>Francisella</taxon>
    </lineage>
</organism>
<dbReference type="EMBL" id="CP000803">
    <property type="protein sequence ID" value="ABU60742.2"/>
    <property type="molecule type" value="Genomic_DNA"/>
</dbReference>
<dbReference type="RefSeq" id="WP_003014356.1">
    <property type="nucleotide sequence ID" value="NC_009749.1"/>
</dbReference>
<dbReference type="SMR" id="A7N9T9"/>
<dbReference type="GeneID" id="75264247"/>
<dbReference type="KEGG" id="fta:FTA_0265"/>
<dbReference type="HOGENOM" id="CLU_098428_0_0_6"/>
<dbReference type="GO" id="GO:1990904">
    <property type="term" value="C:ribonucleoprotein complex"/>
    <property type="evidence" value="ECO:0007669"/>
    <property type="project" value="UniProtKB-KW"/>
</dbReference>
<dbReference type="GO" id="GO:0005840">
    <property type="term" value="C:ribosome"/>
    <property type="evidence" value="ECO:0007669"/>
    <property type="project" value="UniProtKB-KW"/>
</dbReference>
<dbReference type="GO" id="GO:0019843">
    <property type="term" value="F:rRNA binding"/>
    <property type="evidence" value="ECO:0007669"/>
    <property type="project" value="UniProtKB-UniRule"/>
</dbReference>
<dbReference type="GO" id="GO:0003735">
    <property type="term" value="F:structural constituent of ribosome"/>
    <property type="evidence" value="ECO:0007669"/>
    <property type="project" value="InterPro"/>
</dbReference>
<dbReference type="GO" id="GO:0006412">
    <property type="term" value="P:translation"/>
    <property type="evidence" value="ECO:0007669"/>
    <property type="project" value="UniProtKB-UniRule"/>
</dbReference>
<dbReference type="FunFam" id="3.30.1490.10:FF:000001">
    <property type="entry name" value="30S ribosomal protein S8"/>
    <property type="match status" value="1"/>
</dbReference>
<dbReference type="Gene3D" id="3.30.1370.30">
    <property type="match status" value="1"/>
</dbReference>
<dbReference type="Gene3D" id="3.30.1490.10">
    <property type="match status" value="1"/>
</dbReference>
<dbReference type="HAMAP" id="MF_01302_B">
    <property type="entry name" value="Ribosomal_uS8_B"/>
    <property type="match status" value="1"/>
</dbReference>
<dbReference type="InterPro" id="IPR000630">
    <property type="entry name" value="Ribosomal_uS8"/>
</dbReference>
<dbReference type="InterPro" id="IPR047863">
    <property type="entry name" value="Ribosomal_uS8_CS"/>
</dbReference>
<dbReference type="InterPro" id="IPR035987">
    <property type="entry name" value="Ribosomal_uS8_sf"/>
</dbReference>
<dbReference type="NCBIfam" id="NF001109">
    <property type="entry name" value="PRK00136.1"/>
    <property type="match status" value="1"/>
</dbReference>
<dbReference type="PANTHER" id="PTHR11758">
    <property type="entry name" value="40S RIBOSOMAL PROTEIN S15A"/>
    <property type="match status" value="1"/>
</dbReference>
<dbReference type="Pfam" id="PF00410">
    <property type="entry name" value="Ribosomal_S8"/>
    <property type="match status" value="1"/>
</dbReference>
<dbReference type="SUPFAM" id="SSF56047">
    <property type="entry name" value="Ribosomal protein S8"/>
    <property type="match status" value="1"/>
</dbReference>
<dbReference type="PROSITE" id="PS00053">
    <property type="entry name" value="RIBOSOMAL_S8"/>
    <property type="match status" value="1"/>
</dbReference>
<comment type="function">
    <text evidence="1">One of the primary rRNA binding proteins, it binds directly to 16S rRNA central domain where it helps coordinate assembly of the platform of the 30S subunit.</text>
</comment>
<comment type="subunit">
    <text evidence="1">Part of the 30S ribosomal subunit. Contacts proteins S5 and S12.</text>
</comment>
<comment type="similarity">
    <text evidence="1">Belongs to the universal ribosomal protein uS8 family.</text>
</comment>
<feature type="chain" id="PRO_0000322020" description="Small ribosomal subunit protein uS8">
    <location>
        <begin position="1"/>
        <end position="132"/>
    </location>
</feature>
<protein>
    <recommendedName>
        <fullName evidence="1">Small ribosomal subunit protein uS8</fullName>
    </recommendedName>
    <alternativeName>
        <fullName evidence="2">30S ribosomal protein S8</fullName>
    </alternativeName>
</protein>
<proteinExistence type="inferred from homology"/>
<reference key="1">
    <citation type="journal article" date="2009" name="PLoS ONE">
        <title>Complete genome sequence of Francisella tularensis subspecies holarctica FTNF002-00.</title>
        <authorList>
            <person name="Barabote R.D."/>
            <person name="Xie G."/>
            <person name="Brettin T.S."/>
            <person name="Hinrichs S.H."/>
            <person name="Fey P.D."/>
            <person name="Jay J.J."/>
            <person name="Engle J.L."/>
            <person name="Godbole S.D."/>
            <person name="Noronha J.M."/>
            <person name="Scheuermann R.H."/>
            <person name="Zhou L.W."/>
            <person name="Lion C."/>
            <person name="Dempsey M.P."/>
        </authorList>
    </citation>
    <scope>NUCLEOTIDE SEQUENCE [LARGE SCALE GENOMIC DNA]</scope>
    <source>
        <strain>FTNF002-00 / FTA</strain>
    </source>
</reference>
<accession>A7N9T9</accession>